<keyword id="KW-0027">Amidation</keyword>
<keyword id="KW-0044">Antibiotic</keyword>
<keyword id="KW-0929">Antimicrobial</keyword>
<keyword id="KW-0165">Cleavage on pair of basic residues</keyword>
<keyword id="KW-0295">Fungicide</keyword>
<keyword id="KW-0472">Membrane</keyword>
<keyword id="KW-0964">Secreted</keyword>
<keyword id="KW-0732">Signal</keyword>
<keyword id="KW-1052">Target cell membrane</keyword>
<keyword id="KW-1053">Target membrane</keyword>
<feature type="signal peptide" evidence="2">
    <location>
        <begin position="1"/>
        <end position="23"/>
    </location>
</feature>
<feature type="peptide" id="PRO_0000432375" description="Pantinin-1">
    <location>
        <begin position="24"/>
        <end position="37"/>
    </location>
</feature>
<feature type="propeptide" id="PRO_0000432376" evidence="1">
    <location>
        <begin position="41"/>
        <end position="69"/>
    </location>
</feature>
<feature type="modified residue" description="Valine amide" evidence="1">
    <location>
        <position position="37"/>
    </location>
</feature>
<proteinExistence type="inferred from homology"/>
<comment type="function">
    <text evidence="3">Amphipathic peptide that possesses relatively strong activities against Gram-positive bacteria and a fungus, but has very weak antimicrobial activities against Gram-negative bacteria. Also exhibits very low hemolytic activities against human erythrocytes (64 uM induce 21% of hemolysis). Minimal inhibitory concentration (MIC) are the following: 8 uM against S.aureus, 32 uM against B.magaterium, 32 uM against M.luteus, 28 uM against vancomycin-resistant Enterococci, 14 uM against methicillin-resistant S.aureus, 62 uM against E.coli, &gt;87 uM against P.putida, &gt;87 uM against K.oxytoca, 76 uM against E.cloacae, 72 uM against S.enterica and 16 uM against the fungus C.tropicalis.</text>
</comment>
<comment type="subcellular location">
    <subcellularLocation>
        <location evidence="1">Secreted</location>
    </subcellularLocation>
    <subcellularLocation>
        <location evidence="1">Target cell membrane</location>
    </subcellularLocation>
    <text evidence="1">Forms an alpha-helical membrane channel in the prey.</text>
</comment>
<comment type="tissue specificity">
    <text evidence="6">Expressed by the venom gland.</text>
</comment>
<comment type="similarity">
    <text evidence="6">Belongs to the non-disulfide-bridged peptide (NDBP) superfamily. Short antimicrobial peptide (group 4) family.</text>
</comment>
<organism>
    <name type="scientific">Pandinus imperator</name>
    <name type="common">Emperor scorpion</name>
    <dbReference type="NCBI Taxonomy" id="55084"/>
    <lineage>
        <taxon>Eukaryota</taxon>
        <taxon>Metazoa</taxon>
        <taxon>Ecdysozoa</taxon>
        <taxon>Arthropoda</taxon>
        <taxon>Chelicerata</taxon>
        <taxon>Arachnida</taxon>
        <taxon>Scorpiones</taxon>
        <taxon>Iurida</taxon>
        <taxon>Scorpionoidea</taxon>
        <taxon>Scorpionidae</taxon>
        <taxon>Pandininae</taxon>
        <taxon>Pandinus</taxon>
    </lineage>
</organism>
<accession>R4JNJ5</accession>
<dbReference type="EMBL" id="KC538864">
    <property type="protein sequence ID" value="AGK88380.1"/>
    <property type="molecule type" value="mRNA"/>
</dbReference>
<dbReference type="GO" id="GO:0005576">
    <property type="term" value="C:extracellular region"/>
    <property type="evidence" value="ECO:0007669"/>
    <property type="project" value="UniProtKB-SubCell"/>
</dbReference>
<dbReference type="GO" id="GO:0016020">
    <property type="term" value="C:membrane"/>
    <property type="evidence" value="ECO:0007669"/>
    <property type="project" value="UniProtKB-KW"/>
</dbReference>
<dbReference type="GO" id="GO:0044218">
    <property type="term" value="C:other organism cell membrane"/>
    <property type="evidence" value="ECO:0007669"/>
    <property type="project" value="UniProtKB-KW"/>
</dbReference>
<dbReference type="GO" id="GO:0042742">
    <property type="term" value="P:defense response to bacterium"/>
    <property type="evidence" value="ECO:0007669"/>
    <property type="project" value="UniProtKB-KW"/>
</dbReference>
<dbReference type="GO" id="GO:0050832">
    <property type="term" value="P:defense response to fungus"/>
    <property type="evidence" value="ECO:0007669"/>
    <property type="project" value="UniProtKB-KW"/>
</dbReference>
<dbReference type="GO" id="GO:0031640">
    <property type="term" value="P:killing of cells of another organism"/>
    <property type="evidence" value="ECO:0007669"/>
    <property type="project" value="UniProtKB-KW"/>
</dbReference>
<reference key="1">
    <citation type="journal article" date="2013" name="Peptides">
        <title>Three new antimicrobial peptides from the scorpion Pandinus imperator.</title>
        <authorList>
            <person name="Zeng X.C."/>
            <person name="Zhou L."/>
            <person name="Shi W."/>
            <person name="Luo X."/>
            <person name="Zhang L."/>
            <person name="Nie Y."/>
            <person name="Wang J."/>
            <person name="Wu S."/>
            <person name="Cao B."/>
            <person name="Cao H."/>
        </authorList>
    </citation>
    <scope>NUCLEOTIDE SEQUENCE [MRNA]</scope>
    <scope>SYNTHESIS OF 24-37</scope>
    <scope>FUNCTION</scope>
    <scope>NOMENCLATURE</scope>
    <source>
        <tissue>Venom gland</tissue>
    </source>
</reference>
<reference key="2">
    <citation type="journal article" date="2014" name="Peptides">
        <title>Scorpion venom peptides with no disulfide bridges: a review.</title>
        <authorList>
            <person name="Almaaytah A."/>
            <person name="Albalas Q."/>
        </authorList>
    </citation>
    <scope>NOMENCLATURE</scope>
</reference>
<evidence type="ECO:0000250" key="1"/>
<evidence type="ECO:0000255" key="2"/>
<evidence type="ECO:0000269" key="3">
    <source>
    </source>
</evidence>
<evidence type="ECO:0000303" key="4">
    <source>
    </source>
</evidence>
<evidence type="ECO:0000303" key="5">
    <source>
    </source>
</evidence>
<evidence type="ECO:0000305" key="6"/>
<sequence length="69" mass="7891">MKTQFVILMITVILMQMLVQTEGGILGKLWEGFKSIVGKRGLNDRDQLDDLFDSDLSDADIKLLKEMFK</sequence>
<name>NDB4J_PANIM</name>
<protein>
    <recommendedName>
        <fullName evidence="4">Pantinin-1</fullName>
    </recommendedName>
    <alternativeName>
        <fullName evidence="5">Non-disulfide-bridged peptide 4.20</fullName>
        <shortName evidence="5">NDBP-4.20</shortName>
    </alternativeName>
    <alternativeName>
        <fullName evidence="4">Non-disulfide-bridged peptide 5.21</fullName>
        <shortName evidence="4">NDBP-5.21</shortName>
    </alternativeName>
</protein>